<organism>
    <name type="scientific">Shigella dysenteriae serotype 1 (strain Sd197)</name>
    <dbReference type="NCBI Taxonomy" id="300267"/>
    <lineage>
        <taxon>Bacteria</taxon>
        <taxon>Pseudomonadati</taxon>
        <taxon>Pseudomonadota</taxon>
        <taxon>Gammaproteobacteria</taxon>
        <taxon>Enterobacterales</taxon>
        <taxon>Enterobacteriaceae</taxon>
        <taxon>Shigella</taxon>
    </lineage>
</organism>
<evidence type="ECO:0000255" key="1">
    <source>
        <dbReference type="HAMAP-Rule" id="MF_01711"/>
    </source>
</evidence>
<protein>
    <recommendedName>
        <fullName evidence="1">Nickel import ATP-binding protein NikD</fullName>
        <ecNumber evidence="1">7.2.2.11</ecNumber>
    </recommendedName>
</protein>
<reference key="1">
    <citation type="journal article" date="2005" name="Nucleic Acids Res.">
        <title>Genome dynamics and diversity of Shigella species, the etiologic agents of bacillary dysentery.</title>
        <authorList>
            <person name="Yang F."/>
            <person name="Yang J."/>
            <person name="Zhang X."/>
            <person name="Chen L."/>
            <person name="Jiang Y."/>
            <person name="Yan Y."/>
            <person name="Tang X."/>
            <person name="Wang J."/>
            <person name="Xiong Z."/>
            <person name="Dong J."/>
            <person name="Xue Y."/>
            <person name="Zhu Y."/>
            <person name="Xu X."/>
            <person name="Sun L."/>
            <person name="Chen S."/>
            <person name="Nie H."/>
            <person name="Peng J."/>
            <person name="Xu J."/>
            <person name="Wang Y."/>
            <person name="Yuan Z."/>
            <person name="Wen Y."/>
            <person name="Yao Z."/>
            <person name="Shen Y."/>
            <person name="Qiang B."/>
            <person name="Hou Y."/>
            <person name="Yu J."/>
            <person name="Jin Q."/>
        </authorList>
    </citation>
    <scope>NUCLEOTIDE SEQUENCE [LARGE SCALE GENOMIC DNA]</scope>
    <source>
        <strain>Sd197</strain>
    </source>
</reference>
<accession>Q32AQ2</accession>
<proteinExistence type="inferred from homology"/>
<keyword id="KW-0067">ATP-binding</keyword>
<keyword id="KW-0997">Cell inner membrane</keyword>
<keyword id="KW-1003">Cell membrane</keyword>
<keyword id="KW-0406">Ion transport</keyword>
<keyword id="KW-0472">Membrane</keyword>
<keyword id="KW-0533">Nickel</keyword>
<keyword id="KW-0921">Nickel transport</keyword>
<keyword id="KW-0547">Nucleotide-binding</keyword>
<keyword id="KW-1185">Reference proteome</keyword>
<keyword id="KW-1278">Translocase</keyword>
<keyword id="KW-0813">Transport</keyword>
<gene>
    <name evidence="1" type="primary">nikD</name>
    <name type="ordered locus">SDY_3634</name>
</gene>
<dbReference type="EC" id="7.2.2.11" evidence="1"/>
<dbReference type="EMBL" id="CP000034">
    <property type="protein sequence ID" value="ABB63603.1"/>
    <property type="molecule type" value="Genomic_DNA"/>
</dbReference>
<dbReference type="RefSeq" id="WP_001136199.1">
    <property type="nucleotide sequence ID" value="NC_007606.1"/>
</dbReference>
<dbReference type="RefSeq" id="YP_405094.1">
    <property type="nucleotide sequence ID" value="NC_007606.1"/>
</dbReference>
<dbReference type="SMR" id="Q32AQ2"/>
<dbReference type="STRING" id="300267.SDY_3634"/>
<dbReference type="EnsemblBacteria" id="ABB63603">
    <property type="protein sequence ID" value="ABB63603"/>
    <property type="gene ID" value="SDY_3634"/>
</dbReference>
<dbReference type="KEGG" id="sdy:SDY_3634"/>
<dbReference type="PATRIC" id="fig|300267.13.peg.4313"/>
<dbReference type="HOGENOM" id="CLU_000604_1_23_6"/>
<dbReference type="Proteomes" id="UP000002716">
    <property type="component" value="Chromosome"/>
</dbReference>
<dbReference type="GO" id="GO:0005886">
    <property type="term" value="C:plasma membrane"/>
    <property type="evidence" value="ECO:0007669"/>
    <property type="project" value="UniProtKB-SubCell"/>
</dbReference>
<dbReference type="GO" id="GO:0015413">
    <property type="term" value="F:ABC-type nickel transporter activity"/>
    <property type="evidence" value="ECO:0007669"/>
    <property type="project" value="UniProtKB-EC"/>
</dbReference>
<dbReference type="GO" id="GO:0005524">
    <property type="term" value="F:ATP binding"/>
    <property type="evidence" value="ECO:0007669"/>
    <property type="project" value="UniProtKB-KW"/>
</dbReference>
<dbReference type="GO" id="GO:0016887">
    <property type="term" value="F:ATP hydrolysis activity"/>
    <property type="evidence" value="ECO:0007669"/>
    <property type="project" value="InterPro"/>
</dbReference>
<dbReference type="GO" id="GO:0016151">
    <property type="term" value="F:nickel cation binding"/>
    <property type="evidence" value="ECO:0007669"/>
    <property type="project" value="InterPro"/>
</dbReference>
<dbReference type="CDD" id="cd03257">
    <property type="entry name" value="ABC_NikE_OppD_transporters"/>
    <property type="match status" value="1"/>
</dbReference>
<dbReference type="FunFam" id="3.40.50.300:FF:000858">
    <property type="entry name" value="Nickel import ATP-binding protein NikD"/>
    <property type="match status" value="1"/>
</dbReference>
<dbReference type="Gene3D" id="3.40.50.300">
    <property type="entry name" value="P-loop containing nucleotide triphosphate hydrolases"/>
    <property type="match status" value="1"/>
</dbReference>
<dbReference type="InterPro" id="IPR003593">
    <property type="entry name" value="AAA+_ATPase"/>
</dbReference>
<dbReference type="InterPro" id="IPR050388">
    <property type="entry name" value="ABC_Ni/Peptide_Import"/>
</dbReference>
<dbReference type="InterPro" id="IPR003439">
    <property type="entry name" value="ABC_transporter-like_ATP-bd"/>
</dbReference>
<dbReference type="InterPro" id="IPR017871">
    <property type="entry name" value="ABC_transporter-like_CS"/>
</dbReference>
<dbReference type="InterPro" id="IPR014138">
    <property type="entry name" value="Nickel_NikD"/>
</dbReference>
<dbReference type="InterPro" id="IPR027417">
    <property type="entry name" value="P-loop_NTPase"/>
</dbReference>
<dbReference type="NCBIfam" id="TIGR02770">
    <property type="entry name" value="nickel_nikD"/>
    <property type="match status" value="1"/>
</dbReference>
<dbReference type="PANTHER" id="PTHR43297:SF2">
    <property type="entry name" value="DIPEPTIDE TRANSPORT ATP-BINDING PROTEIN DPPD"/>
    <property type="match status" value="1"/>
</dbReference>
<dbReference type="PANTHER" id="PTHR43297">
    <property type="entry name" value="OLIGOPEPTIDE TRANSPORT ATP-BINDING PROTEIN APPD"/>
    <property type="match status" value="1"/>
</dbReference>
<dbReference type="Pfam" id="PF00005">
    <property type="entry name" value="ABC_tran"/>
    <property type="match status" value="1"/>
</dbReference>
<dbReference type="SMART" id="SM00382">
    <property type="entry name" value="AAA"/>
    <property type="match status" value="1"/>
</dbReference>
<dbReference type="SUPFAM" id="SSF52540">
    <property type="entry name" value="P-loop containing nucleoside triphosphate hydrolases"/>
    <property type="match status" value="1"/>
</dbReference>
<dbReference type="PROSITE" id="PS00211">
    <property type="entry name" value="ABC_TRANSPORTER_1"/>
    <property type="match status" value="1"/>
</dbReference>
<dbReference type="PROSITE" id="PS50893">
    <property type="entry name" value="ABC_TRANSPORTER_2"/>
    <property type="match status" value="1"/>
</dbReference>
<dbReference type="PROSITE" id="PS51247">
    <property type="entry name" value="NIKD"/>
    <property type="match status" value="1"/>
</dbReference>
<comment type="function">
    <text evidence="1">Part of the ABC transporter complex NikABCDE involved in nickel import. Responsible for energy coupling to the transport system.</text>
</comment>
<comment type="catalytic activity">
    <reaction evidence="1">
        <text>Ni(2+)(out) + ATP + H2O = Ni(2+)(in) + ADP + phosphate + H(+)</text>
        <dbReference type="Rhea" id="RHEA:15557"/>
        <dbReference type="ChEBI" id="CHEBI:15377"/>
        <dbReference type="ChEBI" id="CHEBI:15378"/>
        <dbReference type="ChEBI" id="CHEBI:30616"/>
        <dbReference type="ChEBI" id="CHEBI:43474"/>
        <dbReference type="ChEBI" id="CHEBI:49786"/>
        <dbReference type="ChEBI" id="CHEBI:456216"/>
        <dbReference type="EC" id="7.2.2.11"/>
    </reaction>
</comment>
<comment type="subunit">
    <text evidence="1">The complex is composed of two ATP-binding proteins (NikD and NikE), two transmembrane proteins (NikB and NikC) and a solute-binding protein (NikA).</text>
</comment>
<comment type="subcellular location">
    <subcellularLocation>
        <location evidence="1">Cell inner membrane</location>
        <topology evidence="1">Peripheral membrane protein</topology>
    </subcellularLocation>
</comment>
<comment type="similarity">
    <text evidence="1">Belongs to the ABC transporter superfamily. Nickel importer (TC 3.A.1.5.3) family.</text>
</comment>
<sequence>MPQQIELRDIALQAAQPLVHGVSLTLQRGRVLALVGGSGSGKSLTCAAALGILPAGVRQTAGEILADGKPVSPCALRGIKIATIMQNPRSAFNPLHTMHTHARETCLALGKPADDATLTAAIEAVGLENAARVLKLYPFEMSGGMLQRMMIAMAVLCESPFIIADEPTTDLDVVAQARILDLLESIMQKQAPGMLLVTHDMGVVARLADDVAVMSDGKIVEQGDVETLFNAPKHAVTRSLVSAHLALYGMELAS</sequence>
<feature type="chain" id="PRO_0000274117" description="Nickel import ATP-binding protein NikD">
    <location>
        <begin position="1"/>
        <end position="254"/>
    </location>
</feature>
<feature type="domain" description="ABC transporter" evidence="1">
    <location>
        <begin position="2"/>
        <end position="241"/>
    </location>
</feature>
<feature type="binding site" evidence="1">
    <location>
        <begin position="36"/>
        <end position="43"/>
    </location>
    <ligand>
        <name>ATP</name>
        <dbReference type="ChEBI" id="CHEBI:30616"/>
    </ligand>
</feature>
<name>NIKD_SHIDS</name>